<gene>
    <name type="primary">pgk</name>
</gene>
<comment type="catalytic activity">
    <reaction>
        <text>(2R)-3-phosphoglycerate + ATP = (2R)-3-phospho-glyceroyl phosphate + ADP</text>
        <dbReference type="Rhea" id="RHEA:14801"/>
        <dbReference type="ChEBI" id="CHEBI:30616"/>
        <dbReference type="ChEBI" id="CHEBI:57604"/>
        <dbReference type="ChEBI" id="CHEBI:58272"/>
        <dbReference type="ChEBI" id="CHEBI:456216"/>
        <dbReference type="EC" id="2.7.2.3"/>
    </reaction>
</comment>
<comment type="pathway">
    <text>Carbohydrate degradation; glycolysis; pyruvate from D-glyceraldehyde 3-phosphate: step 2/5.</text>
</comment>
<comment type="subunit">
    <text evidence="1">Monomer.</text>
</comment>
<comment type="subcellular location">
    <subcellularLocation>
        <location evidence="2">Cytoplasm</location>
    </subcellularLocation>
</comment>
<comment type="similarity">
    <text evidence="2">Belongs to the phosphoglycerate kinase family.</text>
</comment>
<dbReference type="EC" id="2.7.2.3"/>
<dbReference type="EMBL" id="AJ133520">
    <property type="protein sequence ID" value="CAB38646.1"/>
    <property type="molecule type" value="Genomic_DNA"/>
</dbReference>
<dbReference type="RefSeq" id="WP_001074749.1">
    <property type="nucleotide sequence ID" value="NZ_WYDB01000004.1"/>
</dbReference>
<dbReference type="SMR" id="P68820"/>
<dbReference type="OMA" id="DMIFDIG"/>
<dbReference type="UniPathway" id="UPA00109">
    <property type="reaction ID" value="UER00185"/>
</dbReference>
<dbReference type="GO" id="GO:0005829">
    <property type="term" value="C:cytosol"/>
    <property type="evidence" value="ECO:0007669"/>
    <property type="project" value="TreeGrafter"/>
</dbReference>
<dbReference type="GO" id="GO:0043531">
    <property type="term" value="F:ADP binding"/>
    <property type="evidence" value="ECO:0007669"/>
    <property type="project" value="TreeGrafter"/>
</dbReference>
<dbReference type="GO" id="GO:0005524">
    <property type="term" value="F:ATP binding"/>
    <property type="evidence" value="ECO:0007669"/>
    <property type="project" value="UniProtKB-KW"/>
</dbReference>
<dbReference type="GO" id="GO:0004618">
    <property type="term" value="F:phosphoglycerate kinase activity"/>
    <property type="evidence" value="ECO:0007669"/>
    <property type="project" value="UniProtKB-UniRule"/>
</dbReference>
<dbReference type="GO" id="GO:0006094">
    <property type="term" value="P:gluconeogenesis"/>
    <property type="evidence" value="ECO:0007669"/>
    <property type="project" value="TreeGrafter"/>
</dbReference>
<dbReference type="GO" id="GO:0006096">
    <property type="term" value="P:glycolytic process"/>
    <property type="evidence" value="ECO:0007669"/>
    <property type="project" value="UniProtKB-UniRule"/>
</dbReference>
<dbReference type="CDD" id="cd00318">
    <property type="entry name" value="Phosphoglycerate_kinase"/>
    <property type="match status" value="1"/>
</dbReference>
<dbReference type="FunFam" id="3.40.50.1260:FF:000001">
    <property type="entry name" value="Phosphoglycerate kinase"/>
    <property type="match status" value="1"/>
</dbReference>
<dbReference type="FunFam" id="3.40.50.1260:FF:000008">
    <property type="entry name" value="Phosphoglycerate kinase"/>
    <property type="match status" value="1"/>
</dbReference>
<dbReference type="Gene3D" id="3.40.50.1260">
    <property type="entry name" value="Phosphoglycerate kinase, N-terminal domain"/>
    <property type="match status" value="2"/>
</dbReference>
<dbReference type="HAMAP" id="MF_00145">
    <property type="entry name" value="Phosphoglyc_kinase"/>
    <property type="match status" value="1"/>
</dbReference>
<dbReference type="InterPro" id="IPR001576">
    <property type="entry name" value="Phosphoglycerate_kinase"/>
</dbReference>
<dbReference type="InterPro" id="IPR015911">
    <property type="entry name" value="Phosphoglycerate_kinase_CS"/>
</dbReference>
<dbReference type="InterPro" id="IPR015824">
    <property type="entry name" value="Phosphoglycerate_kinase_N"/>
</dbReference>
<dbReference type="InterPro" id="IPR036043">
    <property type="entry name" value="Phosphoglycerate_kinase_sf"/>
</dbReference>
<dbReference type="PANTHER" id="PTHR11406">
    <property type="entry name" value="PHOSPHOGLYCERATE KINASE"/>
    <property type="match status" value="1"/>
</dbReference>
<dbReference type="PANTHER" id="PTHR11406:SF23">
    <property type="entry name" value="PHOSPHOGLYCERATE KINASE 1, CHLOROPLASTIC-RELATED"/>
    <property type="match status" value="1"/>
</dbReference>
<dbReference type="Pfam" id="PF00162">
    <property type="entry name" value="PGK"/>
    <property type="match status" value="1"/>
</dbReference>
<dbReference type="PIRSF" id="PIRSF000724">
    <property type="entry name" value="Pgk"/>
    <property type="match status" value="1"/>
</dbReference>
<dbReference type="PRINTS" id="PR00477">
    <property type="entry name" value="PHGLYCKINASE"/>
</dbReference>
<dbReference type="SUPFAM" id="SSF53748">
    <property type="entry name" value="Phosphoglycerate kinase"/>
    <property type="match status" value="1"/>
</dbReference>
<dbReference type="PROSITE" id="PS00111">
    <property type="entry name" value="PGLYCERATE_KINASE"/>
    <property type="match status" value="1"/>
</dbReference>
<proteinExistence type="inferred from homology"/>
<feature type="chain" id="PRO_0000146006" description="Phosphoglycerate kinase">
    <location>
        <begin position="1"/>
        <end position="396"/>
    </location>
</feature>
<feature type="binding site" evidence="1">
    <location>
        <begin position="21"/>
        <end position="23"/>
    </location>
    <ligand>
        <name>substrate</name>
    </ligand>
</feature>
<feature type="binding site" evidence="1">
    <location>
        <position position="36"/>
    </location>
    <ligand>
        <name>substrate</name>
    </ligand>
</feature>
<feature type="binding site" evidence="1">
    <location>
        <begin position="59"/>
        <end position="62"/>
    </location>
    <ligand>
        <name>substrate</name>
    </ligand>
</feature>
<feature type="binding site" evidence="1">
    <location>
        <position position="119"/>
    </location>
    <ligand>
        <name>substrate</name>
    </ligand>
</feature>
<feature type="binding site" evidence="1">
    <location>
        <position position="156"/>
    </location>
    <ligand>
        <name>substrate</name>
    </ligand>
</feature>
<feature type="binding site" evidence="1">
    <location>
        <position position="206"/>
    </location>
    <ligand>
        <name>ATP</name>
        <dbReference type="ChEBI" id="CHEBI:30616"/>
    </ligand>
</feature>
<feature type="binding site" evidence="1">
    <location>
        <position position="294"/>
    </location>
    <ligand>
        <name>ATP</name>
        <dbReference type="ChEBI" id="CHEBI:30616"/>
    </ligand>
</feature>
<feature type="binding site" evidence="1">
    <location>
        <position position="325"/>
    </location>
    <ligand>
        <name>ATP</name>
        <dbReference type="ChEBI" id="CHEBI:30616"/>
    </ligand>
</feature>
<feature type="binding site" evidence="1">
    <location>
        <begin position="352"/>
        <end position="355"/>
    </location>
    <ligand>
        <name>ATP</name>
        <dbReference type="ChEBI" id="CHEBI:30616"/>
    </ligand>
</feature>
<organism>
    <name type="scientific">Staphylococcus aureus</name>
    <dbReference type="NCBI Taxonomy" id="1280"/>
    <lineage>
        <taxon>Bacteria</taxon>
        <taxon>Bacillati</taxon>
        <taxon>Bacillota</taxon>
        <taxon>Bacilli</taxon>
        <taxon>Bacillales</taxon>
        <taxon>Staphylococcaceae</taxon>
        <taxon>Staphylococcus</taxon>
    </lineage>
</organism>
<keyword id="KW-0067">ATP-binding</keyword>
<keyword id="KW-0963">Cytoplasm</keyword>
<keyword id="KW-0324">Glycolysis</keyword>
<keyword id="KW-0418">Kinase</keyword>
<keyword id="KW-0547">Nucleotide-binding</keyword>
<keyword id="KW-0808">Transferase</keyword>
<reference key="1">
    <citation type="submission" date="1999-03" db="EMBL/GenBank/DDBJ databases">
        <title>Isolation and characterisation of a glycolytic operon in Staphylococcus aureus.</title>
        <authorList>
            <person name="Morrissey J.A."/>
            <person name="Williams P."/>
        </authorList>
    </citation>
    <scope>NUCLEOTIDE SEQUENCE [GENOMIC DNA]</scope>
    <source>
        <strain>BB</strain>
    </source>
</reference>
<name>PGK_STAAU</name>
<evidence type="ECO:0000250" key="1"/>
<evidence type="ECO:0000305" key="2"/>
<sequence length="396" mass="42602">MAKKIVSDLDLKGKTVLVRADFNVPLKDGEITNDNRIVQALPTIQYIIEQGGKIVLFSHLGKVKEESDKAKLTLRPVAEDLSKKLDKEVVFVPETRGEKLEAAIKDLKEGDVLLVENTRYEDLDGKKESKNDPELGKYWASLGDVFVNDAFGTAHREHASNVGISTHLETAAGFLMDKEIKFIGGVVNDPHKPVVAILGGAKVSDKINVIKNLVNIADKIIIGGGMAYTFLKAQGKEIGISLLEEDKIDFAKDLLEKHGDKIVLPVDTKVAKEFSNDAKITVVPSDSIPADQEGMDIGPNTVKLFADELEGAHTVVWNGPMGVFEFSNFAQGTIGVCKAIANLKDAITIIGGGDSAAAAISLGFENDFTHISTGGGASLEYLEGKELPGIKAINNK</sequence>
<protein>
    <recommendedName>
        <fullName>Phosphoglycerate kinase</fullName>
        <ecNumber>2.7.2.3</ecNumber>
    </recommendedName>
</protein>
<accession>P68820</accession>
<accession>Q9Z5C4</accession>